<sequence>MRCFKATIAYDGAYFLGYAKQPNKLGVQDKIENALNTLGIKSVVVAAGRTDKGVHANNQVLSFHAPKHWNVAKLFYYLAPKLAPHIVLKKLEEKNFHARFDAQKRAYRYLLTKNLKTPFLAPYIACGDYGSLDLLNSALKQFTGKHDFSLFKKEGGATTNPNRIIFNAFAYTAFIMGHECVVFKIIGDAFLRSSVRLIIQTCVQYSLEKITLAEIEMQIHNIKATIRTPIMADGLYLHRVYY</sequence>
<keyword id="KW-0413">Isomerase</keyword>
<keyword id="KW-0819">tRNA processing</keyword>
<organism>
    <name type="scientific">Helicobacter pylori (strain HPAG1)</name>
    <dbReference type="NCBI Taxonomy" id="357544"/>
    <lineage>
        <taxon>Bacteria</taxon>
        <taxon>Pseudomonadati</taxon>
        <taxon>Campylobacterota</taxon>
        <taxon>Epsilonproteobacteria</taxon>
        <taxon>Campylobacterales</taxon>
        <taxon>Helicobacteraceae</taxon>
        <taxon>Helicobacter</taxon>
    </lineage>
</organism>
<feature type="chain" id="PRO_1000017093" description="tRNA pseudouridine synthase A">
    <location>
        <begin position="1"/>
        <end position="242"/>
    </location>
</feature>
<feature type="active site" description="Nucleophile" evidence="1">
    <location>
        <position position="51"/>
    </location>
</feature>
<feature type="binding site" evidence="1">
    <location>
        <position position="107"/>
    </location>
    <ligand>
        <name>substrate</name>
    </ligand>
</feature>
<accession>Q1CSH3</accession>
<reference key="1">
    <citation type="journal article" date="2006" name="Proc. Natl. Acad. Sci. U.S.A.">
        <title>The complete genome sequence of a chronic atrophic gastritis Helicobacter pylori strain: evolution during disease progression.</title>
        <authorList>
            <person name="Oh J.D."/>
            <person name="Kling-Baeckhed H."/>
            <person name="Giannakis M."/>
            <person name="Xu J."/>
            <person name="Fulton R.S."/>
            <person name="Fulton L.A."/>
            <person name="Cordum H.S."/>
            <person name="Wang C."/>
            <person name="Elliott G."/>
            <person name="Edwards J."/>
            <person name="Mardis E.R."/>
            <person name="Engstrand L.G."/>
            <person name="Gordon J.I."/>
        </authorList>
    </citation>
    <scope>NUCLEOTIDE SEQUENCE [LARGE SCALE GENOMIC DNA]</scope>
    <source>
        <strain>HPAG1</strain>
    </source>
</reference>
<comment type="function">
    <text evidence="1">Formation of pseudouridine at positions 38, 39 and 40 in the anticodon stem and loop of transfer RNAs.</text>
</comment>
<comment type="catalytic activity">
    <reaction evidence="1">
        <text>uridine(38/39/40) in tRNA = pseudouridine(38/39/40) in tRNA</text>
        <dbReference type="Rhea" id="RHEA:22376"/>
        <dbReference type="Rhea" id="RHEA-COMP:10085"/>
        <dbReference type="Rhea" id="RHEA-COMP:10087"/>
        <dbReference type="ChEBI" id="CHEBI:65314"/>
        <dbReference type="ChEBI" id="CHEBI:65315"/>
        <dbReference type="EC" id="5.4.99.12"/>
    </reaction>
</comment>
<comment type="subunit">
    <text evidence="1">Homodimer.</text>
</comment>
<comment type="similarity">
    <text evidence="1">Belongs to the tRNA pseudouridine synthase TruA family.</text>
</comment>
<protein>
    <recommendedName>
        <fullName evidence="1">tRNA pseudouridine synthase A</fullName>
        <ecNumber evidence="1">5.4.99.12</ecNumber>
    </recommendedName>
    <alternativeName>
        <fullName evidence="1">tRNA pseudouridine(38-40) synthase</fullName>
    </alternativeName>
    <alternativeName>
        <fullName evidence="1">tRNA pseudouridylate synthase I</fullName>
    </alternativeName>
    <alternativeName>
        <fullName evidence="1">tRNA-uridine isomerase I</fullName>
    </alternativeName>
</protein>
<dbReference type="EC" id="5.4.99.12" evidence="1"/>
<dbReference type="EMBL" id="CP000241">
    <property type="protein sequence ID" value="ABF85099.1"/>
    <property type="molecule type" value="Genomic_DNA"/>
</dbReference>
<dbReference type="RefSeq" id="WP_001203281.1">
    <property type="nucleotide sequence ID" value="NC_008086.1"/>
</dbReference>
<dbReference type="SMR" id="Q1CSH3"/>
<dbReference type="KEGG" id="hpa:HPAG1_1032"/>
<dbReference type="HOGENOM" id="CLU_014673_0_1_7"/>
<dbReference type="GO" id="GO:0003723">
    <property type="term" value="F:RNA binding"/>
    <property type="evidence" value="ECO:0007669"/>
    <property type="project" value="InterPro"/>
</dbReference>
<dbReference type="GO" id="GO:0160147">
    <property type="term" value="F:tRNA pseudouridine(38-40) synthase activity"/>
    <property type="evidence" value="ECO:0007669"/>
    <property type="project" value="UniProtKB-EC"/>
</dbReference>
<dbReference type="GO" id="GO:0031119">
    <property type="term" value="P:tRNA pseudouridine synthesis"/>
    <property type="evidence" value="ECO:0007669"/>
    <property type="project" value="UniProtKB-UniRule"/>
</dbReference>
<dbReference type="CDD" id="cd02570">
    <property type="entry name" value="PseudoU_synth_EcTruA"/>
    <property type="match status" value="1"/>
</dbReference>
<dbReference type="FunFam" id="3.30.70.580:FF:000023">
    <property type="entry name" value="tRNA pseudouridine synthase A"/>
    <property type="match status" value="1"/>
</dbReference>
<dbReference type="Gene3D" id="3.30.70.660">
    <property type="entry name" value="Pseudouridine synthase I, catalytic domain, C-terminal subdomain"/>
    <property type="match status" value="1"/>
</dbReference>
<dbReference type="Gene3D" id="3.30.70.580">
    <property type="entry name" value="Pseudouridine synthase I, catalytic domain, N-terminal subdomain"/>
    <property type="match status" value="1"/>
</dbReference>
<dbReference type="HAMAP" id="MF_00171">
    <property type="entry name" value="TruA"/>
    <property type="match status" value="1"/>
</dbReference>
<dbReference type="InterPro" id="IPR020103">
    <property type="entry name" value="PsdUridine_synth_cat_dom_sf"/>
</dbReference>
<dbReference type="InterPro" id="IPR001406">
    <property type="entry name" value="PsdUridine_synth_TruA"/>
</dbReference>
<dbReference type="InterPro" id="IPR020097">
    <property type="entry name" value="PsdUridine_synth_TruA_a/b_dom"/>
</dbReference>
<dbReference type="InterPro" id="IPR020095">
    <property type="entry name" value="PsdUridine_synth_TruA_C"/>
</dbReference>
<dbReference type="InterPro" id="IPR020094">
    <property type="entry name" value="TruA/RsuA/RluB/E/F_N"/>
</dbReference>
<dbReference type="NCBIfam" id="TIGR00071">
    <property type="entry name" value="hisT_truA"/>
    <property type="match status" value="1"/>
</dbReference>
<dbReference type="PANTHER" id="PTHR11142">
    <property type="entry name" value="PSEUDOURIDYLATE SYNTHASE"/>
    <property type="match status" value="1"/>
</dbReference>
<dbReference type="PANTHER" id="PTHR11142:SF0">
    <property type="entry name" value="TRNA PSEUDOURIDINE SYNTHASE-LIKE 1"/>
    <property type="match status" value="1"/>
</dbReference>
<dbReference type="Pfam" id="PF01416">
    <property type="entry name" value="PseudoU_synth_1"/>
    <property type="match status" value="2"/>
</dbReference>
<dbReference type="PIRSF" id="PIRSF001430">
    <property type="entry name" value="tRNA_psdUrid_synth"/>
    <property type="match status" value="1"/>
</dbReference>
<dbReference type="SUPFAM" id="SSF55120">
    <property type="entry name" value="Pseudouridine synthase"/>
    <property type="match status" value="1"/>
</dbReference>
<name>TRUA_HELPH</name>
<gene>
    <name evidence="1" type="primary">truA</name>
    <name type="ordered locus">HPAG1_1032</name>
</gene>
<proteinExistence type="inferred from homology"/>
<evidence type="ECO:0000255" key="1">
    <source>
        <dbReference type="HAMAP-Rule" id="MF_00171"/>
    </source>
</evidence>